<organism>
    <name type="scientific">Salmonella paratyphi A (strain AKU_12601)</name>
    <dbReference type="NCBI Taxonomy" id="554290"/>
    <lineage>
        <taxon>Bacteria</taxon>
        <taxon>Pseudomonadati</taxon>
        <taxon>Pseudomonadota</taxon>
        <taxon>Gammaproteobacteria</taxon>
        <taxon>Enterobacterales</taxon>
        <taxon>Enterobacteriaceae</taxon>
        <taxon>Salmonella</taxon>
    </lineage>
</organism>
<name>MNME_SALPK</name>
<comment type="function">
    <text evidence="1">Exhibits a very high intrinsic GTPase hydrolysis rate. Involved in the addition of a carboxymethylaminomethyl (cmnm) group at the wobble position (U34) of certain tRNAs, forming tRNA-cmnm(5)s(2)U34.</text>
</comment>
<comment type="cofactor">
    <cofactor evidence="1">
        <name>K(+)</name>
        <dbReference type="ChEBI" id="CHEBI:29103"/>
    </cofactor>
    <text evidence="1">Binds 1 potassium ion per subunit.</text>
</comment>
<comment type="subunit">
    <text evidence="1">Homodimer. Heterotetramer of two MnmE and two MnmG subunits.</text>
</comment>
<comment type="subcellular location">
    <subcellularLocation>
        <location evidence="1">Cytoplasm</location>
    </subcellularLocation>
</comment>
<comment type="similarity">
    <text evidence="1">Belongs to the TRAFAC class TrmE-Era-EngA-EngB-Septin-like GTPase superfamily. TrmE GTPase family.</text>
</comment>
<dbReference type="EC" id="3.6.-.-" evidence="1"/>
<dbReference type="EMBL" id="FM200053">
    <property type="protein sequence ID" value="CAR61717.1"/>
    <property type="molecule type" value="Genomic_DNA"/>
</dbReference>
<dbReference type="RefSeq" id="WP_000019076.1">
    <property type="nucleotide sequence ID" value="NC_011147.1"/>
</dbReference>
<dbReference type="SMR" id="B5BIL9"/>
<dbReference type="KEGG" id="sek:SSPA3442"/>
<dbReference type="HOGENOM" id="CLU_019624_4_1_6"/>
<dbReference type="Proteomes" id="UP000001869">
    <property type="component" value="Chromosome"/>
</dbReference>
<dbReference type="GO" id="GO:0005829">
    <property type="term" value="C:cytosol"/>
    <property type="evidence" value="ECO:0007669"/>
    <property type="project" value="TreeGrafter"/>
</dbReference>
<dbReference type="GO" id="GO:0005525">
    <property type="term" value="F:GTP binding"/>
    <property type="evidence" value="ECO:0007669"/>
    <property type="project" value="UniProtKB-UniRule"/>
</dbReference>
<dbReference type="GO" id="GO:0003924">
    <property type="term" value="F:GTPase activity"/>
    <property type="evidence" value="ECO:0007669"/>
    <property type="project" value="UniProtKB-UniRule"/>
</dbReference>
<dbReference type="GO" id="GO:0046872">
    <property type="term" value="F:metal ion binding"/>
    <property type="evidence" value="ECO:0007669"/>
    <property type="project" value="UniProtKB-KW"/>
</dbReference>
<dbReference type="GO" id="GO:0030488">
    <property type="term" value="P:tRNA methylation"/>
    <property type="evidence" value="ECO:0007669"/>
    <property type="project" value="TreeGrafter"/>
</dbReference>
<dbReference type="GO" id="GO:0002098">
    <property type="term" value="P:tRNA wobble uridine modification"/>
    <property type="evidence" value="ECO:0007669"/>
    <property type="project" value="TreeGrafter"/>
</dbReference>
<dbReference type="CDD" id="cd04164">
    <property type="entry name" value="trmE"/>
    <property type="match status" value="1"/>
</dbReference>
<dbReference type="CDD" id="cd14858">
    <property type="entry name" value="TrmE_N"/>
    <property type="match status" value="1"/>
</dbReference>
<dbReference type="FunFam" id="3.30.1360.120:FF:000001">
    <property type="entry name" value="tRNA modification GTPase MnmE"/>
    <property type="match status" value="1"/>
</dbReference>
<dbReference type="FunFam" id="3.40.50.300:FF:000249">
    <property type="entry name" value="tRNA modification GTPase MnmE"/>
    <property type="match status" value="1"/>
</dbReference>
<dbReference type="Gene3D" id="3.40.50.300">
    <property type="entry name" value="P-loop containing nucleotide triphosphate hydrolases"/>
    <property type="match status" value="1"/>
</dbReference>
<dbReference type="Gene3D" id="3.30.1360.120">
    <property type="entry name" value="Probable tRNA modification gtpase trme, domain 1"/>
    <property type="match status" value="1"/>
</dbReference>
<dbReference type="Gene3D" id="1.20.120.430">
    <property type="entry name" value="tRNA modification GTPase MnmE domain 2"/>
    <property type="match status" value="1"/>
</dbReference>
<dbReference type="HAMAP" id="MF_00379">
    <property type="entry name" value="GTPase_MnmE"/>
    <property type="match status" value="1"/>
</dbReference>
<dbReference type="InterPro" id="IPR031168">
    <property type="entry name" value="G_TrmE"/>
</dbReference>
<dbReference type="InterPro" id="IPR006073">
    <property type="entry name" value="GTP-bd"/>
</dbReference>
<dbReference type="InterPro" id="IPR018948">
    <property type="entry name" value="GTP-bd_TrmE_N"/>
</dbReference>
<dbReference type="InterPro" id="IPR004520">
    <property type="entry name" value="GTPase_MnmE"/>
</dbReference>
<dbReference type="InterPro" id="IPR027368">
    <property type="entry name" value="MnmE_dom2"/>
</dbReference>
<dbReference type="InterPro" id="IPR025867">
    <property type="entry name" value="MnmE_helical"/>
</dbReference>
<dbReference type="InterPro" id="IPR027417">
    <property type="entry name" value="P-loop_NTPase"/>
</dbReference>
<dbReference type="InterPro" id="IPR005225">
    <property type="entry name" value="Small_GTP-bd"/>
</dbReference>
<dbReference type="InterPro" id="IPR027266">
    <property type="entry name" value="TrmE/GcvT_dom1"/>
</dbReference>
<dbReference type="NCBIfam" id="TIGR00450">
    <property type="entry name" value="mnmE_trmE_thdF"/>
    <property type="match status" value="1"/>
</dbReference>
<dbReference type="NCBIfam" id="NF003661">
    <property type="entry name" value="PRK05291.1-3"/>
    <property type="match status" value="1"/>
</dbReference>
<dbReference type="NCBIfam" id="TIGR00231">
    <property type="entry name" value="small_GTP"/>
    <property type="match status" value="1"/>
</dbReference>
<dbReference type="PANTHER" id="PTHR42714">
    <property type="entry name" value="TRNA MODIFICATION GTPASE GTPBP3"/>
    <property type="match status" value="1"/>
</dbReference>
<dbReference type="PANTHER" id="PTHR42714:SF2">
    <property type="entry name" value="TRNA MODIFICATION GTPASE GTPBP3, MITOCHONDRIAL"/>
    <property type="match status" value="1"/>
</dbReference>
<dbReference type="Pfam" id="PF01926">
    <property type="entry name" value="MMR_HSR1"/>
    <property type="match status" value="1"/>
</dbReference>
<dbReference type="Pfam" id="PF12631">
    <property type="entry name" value="MnmE_helical"/>
    <property type="match status" value="1"/>
</dbReference>
<dbReference type="Pfam" id="PF10396">
    <property type="entry name" value="TrmE_N"/>
    <property type="match status" value="1"/>
</dbReference>
<dbReference type="SUPFAM" id="SSF52540">
    <property type="entry name" value="P-loop containing nucleoside triphosphate hydrolases"/>
    <property type="match status" value="1"/>
</dbReference>
<dbReference type="SUPFAM" id="SSF116878">
    <property type="entry name" value="TrmE connector domain"/>
    <property type="match status" value="1"/>
</dbReference>
<dbReference type="PROSITE" id="PS51709">
    <property type="entry name" value="G_TRME"/>
    <property type="match status" value="1"/>
</dbReference>
<reference key="1">
    <citation type="journal article" date="2009" name="BMC Genomics">
        <title>Pseudogene accumulation in the evolutionary histories of Salmonella enterica serovars Paratyphi A and Typhi.</title>
        <authorList>
            <person name="Holt K.E."/>
            <person name="Thomson N.R."/>
            <person name="Wain J."/>
            <person name="Langridge G.C."/>
            <person name="Hasan R."/>
            <person name="Bhutta Z.A."/>
            <person name="Quail M.A."/>
            <person name="Norbertczak H."/>
            <person name="Walker D."/>
            <person name="Simmonds M."/>
            <person name="White B."/>
            <person name="Bason N."/>
            <person name="Mungall K."/>
            <person name="Dougan G."/>
            <person name="Parkhill J."/>
        </authorList>
    </citation>
    <scope>NUCLEOTIDE SEQUENCE [LARGE SCALE GENOMIC DNA]</scope>
    <source>
        <strain>AKU_12601</strain>
    </source>
</reference>
<proteinExistence type="inferred from homology"/>
<accession>B5BIL9</accession>
<feature type="chain" id="PRO_1000197062" description="tRNA modification GTPase MnmE">
    <location>
        <begin position="1"/>
        <end position="454"/>
    </location>
</feature>
<feature type="domain" description="TrmE-type G">
    <location>
        <begin position="216"/>
        <end position="377"/>
    </location>
</feature>
<feature type="binding site" evidence="1">
    <location>
        <position position="23"/>
    </location>
    <ligand>
        <name>(6S)-5-formyl-5,6,7,8-tetrahydrofolate</name>
        <dbReference type="ChEBI" id="CHEBI:57457"/>
    </ligand>
</feature>
<feature type="binding site" evidence="1">
    <location>
        <position position="80"/>
    </location>
    <ligand>
        <name>(6S)-5-formyl-5,6,7,8-tetrahydrofolate</name>
        <dbReference type="ChEBI" id="CHEBI:57457"/>
    </ligand>
</feature>
<feature type="binding site" evidence="1">
    <location>
        <position position="120"/>
    </location>
    <ligand>
        <name>(6S)-5-formyl-5,6,7,8-tetrahydrofolate</name>
        <dbReference type="ChEBI" id="CHEBI:57457"/>
    </ligand>
</feature>
<feature type="binding site" evidence="1">
    <location>
        <begin position="226"/>
        <end position="231"/>
    </location>
    <ligand>
        <name>GTP</name>
        <dbReference type="ChEBI" id="CHEBI:37565"/>
    </ligand>
</feature>
<feature type="binding site" evidence="1">
    <location>
        <position position="226"/>
    </location>
    <ligand>
        <name>K(+)</name>
        <dbReference type="ChEBI" id="CHEBI:29103"/>
    </ligand>
</feature>
<feature type="binding site" evidence="1">
    <location>
        <position position="230"/>
    </location>
    <ligand>
        <name>Mg(2+)</name>
        <dbReference type="ChEBI" id="CHEBI:18420"/>
    </ligand>
</feature>
<feature type="binding site" evidence="1">
    <location>
        <begin position="245"/>
        <end position="251"/>
    </location>
    <ligand>
        <name>GTP</name>
        <dbReference type="ChEBI" id="CHEBI:37565"/>
    </ligand>
</feature>
<feature type="binding site" evidence="1">
    <location>
        <position position="245"/>
    </location>
    <ligand>
        <name>K(+)</name>
        <dbReference type="ChEBI" id="CHEBI:29103"/>
    </ligand>
</feature>
<feature type="binding site" evidence="1">
    <location>
        <position position="247"/>
    </location>
    <ligand>
        <name>K(+)</name>
        <dbReference type="ChEBI" id="CHEBI:29103"/>
    </ligand>
</feature>
<feature type="binding site" evidence="1">
    <location>
        <position position="250"/>
    </location>
    <ligand>
        <name>K(+)</name>
        <dbReference type="ChEBI" id="CHEBI:29103"/>
    </ligand>
</feature>
<feature type="binding site" evidence="1">
    <location>
        <position position="251"/>
    </location>
    <ligand>
        <name>Mg(2+)</name>
        <dbReference type="ChEBI" id="CHEBI:18420"/>
    </ligand>
</feature>
<feature type="binding site" evidence="1">
    <location>
        <begin position="270"/>
        <end position="273"/>
    </location>
    <ligand>
        <name>GTP</name>
        <dbReference type="ChEBI" id="CHEBI:37565"/>
    </ligand>
</feature>
<feature type="binding site" evidence="1">
    <location>
        <begin position="335"/>
        <end position="338"/>
    </location>
    <ligand>
        <name>GTP</name>
        <dbReference type="ChEBI" id="CHEBI:37565"/>
    </ligand>
</feature>
<feature type="binding site" evidence="1">
    <location>
        <begin position="358"/>
        <end position="360"/>
    </location>
    <ligand>
        <name>GTP</name>
        <dbReference type="ChEBI" id="CHEBI:37565"/>
    </ligand>
</feature>
<feature type="binding site" evidence="1">
    <location>
        <position position="454"/>
    </location>
    <ligand>
        <name>(6S)-5-formyl-5,6,7,8-tetrahydrofolate</name>
        <dbReference type="ChEBI" id="CHEBI:57457"/>
    </ligand>
</feature>
<gene>
    <name evidence="1" type="primary">mnmE</name>
    <name evidence="1" type="synonym">trmE</name>
    <name type="ordered locus">SSPA3442</name>
</gene>
<keyword id="KW-0963">Cytoplasm</keyword>
<keyword id="KW-0342">GTP-binding</keyword>
<keyword id="KW-0378">Hydrolase</keyword>
<keyword id="KW-0460">Magnesium</keyword>
<keyword id="KW-0479">Metal-binding</keyword>
<keyword id="KW-0547">Nucleotide-binding</keyword>
<keyword id="KW-0630">Potassium</keyword>
<keyword id="KW-0819">tRNA processing</keyword>
<evidence type="ECO:0000255" key="1">
    <source>
        <dbReference type="HAMAP-Rule" id="MF_00379"/>
    </source>
</evidence>
<sequence>MSHNDTIVAQATPPGRGGVGILRISGLKARDVAQEVLGKLPKPRYADYLPFKDVDGSALDQGIALWFPGPNSFTGEDVLELQGHGGPVILDLLLKRILTLPGVRIARPGEFSERAFLNDKLDLAQAEAIADLIDASSEQAARSALNSLQGAFSARVNHLVEALTHLRIYVEAAIDFPDEEIDFLSDGKIEAQLNGVIADLDAVRTEARQGSLLREGMKVVIAGRPNAGKSSLLNALAGREAAIVTDIAGTTRDVLREHIHIDGMPLHIIDTAGLRDANDEVERIGIERAWQEIEQADRVLFMVDGTTTDAVDPADIWPDFIARLPKNLPITVVRNKADITGETLGISEVNGHSLVRLSARTGEGVDVLRNNLKQSMGFETNMEGGFLARRRHLQALAEAANHLEQGKAQLLGAWAGELLAEELRLAQQSLSEITGEFTSDDLLGRIFSSFCIGK</sequence>
<protein>
    <recommendedName>
        <fullName evidence="1">tRNA modification GTPase MnmE</fullName>
        <ecNumber evidence="1">3.6.-.-</ecNumber>
    </recommendedName>
</protein>